<accession>B7KWY7</accession>
<proteinExistence type="inferred from homology"/>
<protein>
    <recommendedName>
        <fullName evidence="1">Large ribosomal subunit protein bL33</fullName>
    </recommendedName>
    <alternativeName>
        <fullName evidence="2">50S ribosomal protein L33</fullName>
    </alternativeName>
</protein>
<sequence>MAKAVTVKIRLVSTADTGYFYVTKKNSRTQTEKMVMKKYDPVARKHVEFKEAKIK</sequence>
<reference key="1">
    <citation type="submission" date="2008-12" db="EMBL/GenBank/DDBJ databases">
        <title>Complete sequence of chromosome of Methylobacterium chloromethanicum CM4.</title>
        <authorList>
            <consortium name="US DOE Joint Genome Institute"/>
            <person name="Lucas S."/>
            <person name="Copeland A."/>
            <person name="Lapidus A."/>
            <person name="Glavina del Rio T."/>
            <person name="Dalin E."/>
            <person name="Tice H."/>
            <person name="Bruce D."/>
            <person name="Goodwin L."/>
            <person name="Pitluck S."/>
            <person name="Chertkov O."/>
            <person name="Brettin T."/>
            <person name="Detter J.C."/>
            <person name="Han C."/>
            <person name="Larimer F."/>
            <person name="Land M."/>
            <person name="Hauser L."/>
            <person name="Kyrpides N."/>
            <person name="Mikhailova N."/>
            <person name="Marx C."/>
            <person name="Richardson P."/>
        </authorList>
    </citation>
    <scope>NUCLEOTIDE SEQUENCE [LARGE SCALE GENOMIC DNA]</scope>
    <source>
        <strain>CM4 / NCIMB 13688</strain>
    </source>
</reference>
<organism>
    <name type="scientific">Methylorubrum extorquens (strain CM4 / NCIMB 13688)</name>
    <name type="common">Methylobacterium extorquens</name>
    <dbReference type="NCBI Taxonomy" id="440085"/>
    <lineage>
        <taxon>Bacteria</taxon>
        <taxon>Pseudomonadati</taxon>
        <taxon>Pseudomonadota</taxon>
        <taxon>Alphaproteobacteria</taxon>
        <taxon>Hyphomicrobiales</taxon>
        <taxon>Methylobacteriaceae</taxon>
        <taxon>Methylorubrum</taxon>
    </lineage>
</organism>
<dbReference type="EMBL" id="CP001298">
    <property type="protein sequence ID" value="ACK82954.1"/>
    <property type="molecule type" value="Genomic_DNA"/>
</dbReference>
<dbReference type="RefSeq" id="WP_003602581.1">
    <property type="nucleotide sequence ID" value="NC_011757.1"/>
</dbReference>
<dbReference type="SMR" id="B7KWY7"/>
<dbReference type="GeneID" id="72989427"/>
<dbReference type="KEGG" id="mch:Mchl_2107"/>
<dbReference type="HOGENOM" id="CLU_190949_1_1_5"/>
<dbReference type="Proteomes" id="UP000002385">
    <property type="component" value="Chromosome"/>
</dbReference>
<dbReference type="GO" id="GO:0022625">
    <property type="term" value="C:cytosolic large ribosomal subunit"/>
    <property type="evidence" value="ECO:0007669"/>
    <property type="project" value="TreeGrafter"/>
</dbReference>
<dbReference type="GO" id="GO:0003735">
    <property type="term" value="F:structural constituent of ribosome"/>
    <property type="evidence" value="ECO:0007669"/>
    <property type="project" value="InterPro"/>
</dbReference>
<dbReference type="GO" id="GO:0006412">
    <property type="term" value="P:translation"/>
    <property type="evidence" value="ECO:0007669"/>
    <property type="project" value="UniProtKB-UniRule"/>
</dbReference>
<dbReference type="Gene3D" id="2.20.28.120">
    <property type="entry name" value="Ribosomal protein L33"/>
    <property type="match status" value="1"/>
</dbReference>
<dbReference type="HAMAP" id="MF_00294">
    <property type="entry name" value="Ribosomal_bL33"/>
    <property type="match status" value="1"/>
</dbReference>
<dbReference type="InterPro" id="IPR001705">
    <property type="entry name" value="Ribosomal_bL33"/>
</dbReference>
<dbReference type="InterPro" id="IPR018264">
    <property type="entry name" value="Ribosomal_bL33_CS"/>
</dbReference>
<dbReference type="InterPro" id="IPR038584">
    <property type="entry name" value="Ribosomal_bL33_sf"/>
</dbReference>
<dbReference type="InterPro" id="IPR011332">
    <property type="entry name" value="Ribosomal_zn-bd"/>
</dbReference>
<dbReference type="NCBIfam" id="NF001860">
    <property type="entry name" value="PRK00595.1"/>
    <property type="match status" value="1"/>
</dbReference>
<dbReference type="NCBIfam" id="TIGR01023">
    <property type="entry name" value="rpmG_bact"/>
    <property type="match status" value="1"/>
</dbReference>
<dbReference type="PANTHER" id="PTHR15238">
    <property type="entry name" value="54S RIBOSOMAL PROTEIN L39, MITOCHONDRIAL"/>
    <property type="match status" value="1"/>
</dbReference>
<dbReference type="PANTHER" id="PTHR15238:SF1">
    <property type="entry name" value="LARGE RIBOSOMAL SUBUNIT PROTEIN BL33M"/>
    <property type="match status" value="1"/>
</dbReference>
<dbReference type="Pfam" id="PF00471">
    <property type="entry name" value="Ribosomal_L33"/>
    <property type="match status" value="1"/>
</dbReference>
<dbReference type="SUPFAM" id="SSF57829">
    <property type="entry name" value="Zn-binding ribosomal proteins"/>
    <property type="match status" value="1"/>
</dbReference>
<dbReference type="PROSITE" id="PS00582">
    <property type="entry name" value="RIBOSOMAL_L33"/>
    <property type="match status" value="1"/>
</dbReference>
<keyword id="KW-0687">Ribonucleoprotein</keyword>
<keyword id="KW-0689">Ribosomal protein</keyword>
<feature type="chain" id="PRO_1000194058" description="Large ribosomal subunit protein bL33">
    <location>
        <begin position="1"/>
        <end position="55"/>
    </location>
</feature>
<name>RL33_METC4</name>
<evidence type="ECO:0000255" key="1">
    <source>
        <dbReference type="HAMAP-Rule" id="MF_00294"/>
    </source>
</evidence>
<evidence type="ECO:0000305" key="2"/>
<gene>
    <name evidence="1" type="primary">rpmG</name>
    <name type="ordered locus">Mchl_2107</name>
</gene>
<comment type="similarity">
    <text evidence="1">Belongs to the bacterial ribosomal protein bL33 family.</text>
</comment>